<gene>
    <name evidence="7" type="primary">chsB</name>
    <name type="ORF">AO090701000589</name>
</gene>
<feature type="chain" id="PRO_0000460871" description="Chitin synthase B">
    <location>
        <begin position="1"/>
        <end position="916"/>
    </location>
</feature>
<feature type="transmembrane region" description="Helical" evidence="1">
    <location>
        <begin position="572"/>
        <end position="594"/>
    </location>
</feature>
<feature type="transmembrane region" description="Helical" evidence="1">
    <location>
        <begin position="628"/>
        <end position="648"/>
    </location>
</feature>
<feature type="transmembrane region" description="Helical" evidence="1">
    <location>
        <begin position="663"/>
        <end position="683"/>
    </location>
</feature>
<feature type="transmembrane region" description="Helical" evidence="1">
    <location>
        <begin position="715"/>
        <end position="735"/>
    </location>
</feature>
<feature type="transmembrane region" description="Helical" evidence="1">
    <location>
        <begin position="743"/>
        <end position="763"/>
    </location>
</feature>
<feature type="transmembrane region" description="Helical" evidence="1">
    <location>
        <begin position="845"/>
        <end position="865"/>
    </location>
</feature>
<feature type="transmembrane region" description="Helical" evidence="1">
    <location>
        <begin position="884"/>
        <end position="904"/>
    </location>
</feature>
<feature type="region of interest" description="Disordered" evidence="3">
    <location>
        <begin position="1"/>
        <end position="84"/>
    </location>
</feature>
<feature type="region of interest" description="Disordered" evidence="3">
    <location>
        <begin position="114"/>
        <end position="141"/>
    </location>
</feature>
<feature type="compositionally biased region" description="Polar residues" evidence="3">
    <location>
        <begin position="60"/>
        <end position="75"/>
    </location>
</feature>
<feature type="glycosylation site" description="N-linked (GlcNAc...) asparagine" evidence="2">
    <location>
        <position position="18"/>
    </location>
</feature>
<feature type="glycosylation site" description="N-linked (GlcNAc...) asparagine" evidence="2">
    <location>
        <position position="546"/>
    </location>
</feature>
<comment type="function">
    <text evidence="4 5 6 9">Polymerizes chitin, a structural polymer of the cell wall and septum, by transferring the sugar moiety of UDP-GlcNAc to the non-reducing end of the growing chitin polymer (Probable). Involved in hyphal growth and more particularly in branching (PubMed:11916702, PubMed:12480906, PubMed:12514801).</text>
</comment>
<comment type="catalytic activity">
    <reaction evidence="9">
        <text>[(1-&gt;4)-N-acetyl-beta-D-glucosaminyl](n) + UDP-N-acetyl-alpha-D-glucosamine = [(1-&gt;4)-N-acetyl-beta-D-glucosaminyl](n+1) + UDP + H(+)</text>
        <dbReference type="Rhea" id="RHEA:16637"/>
        <dbReference type="Rhea" id="RHEA-COMP:9593"/>
        <dbReference type="Rhea" id="RHEA-COMP:9595"/>
        <dbReference type="ChEBI" id="CHEBI:15378"/>
        <dbReference type="ChEBI" id="CHEBI:17029"/>
        <dbReference type="ChEBI" id="CHEBI:57705"/>
        <dbReference type="ChEBI" id="CHEBI:58223"/>
        <dbReference type="EC" id="2.4.1.16"/>
    </reaction>
    <physiologicalReaction direction="left-to-right" evidence="9">
        <dbReference type="Rhea" id="RHEA:16638"/>
    </physiologicalReaction>
</comment>
<comment type="subcellular location">
    <subcellularLocation>
        <location evidence="8">Cell membrane</location>
        <topology evidence="1">Multi-pass membrane protein</topology>
    </subcellularLocation>
</comment>
<comment type="induction">
    <text evidence="5">Expressed during exponential growth (PubMed:12480906). The promoter contains one putative AbaA-binding site (CATTCC/T) and one sequence matching the consensus sequence recognized by AbaA and BrlA (C/AG/AAGGG/A) (PubMed:12480906).</text>
</comment>
<comment type="disruption phenotype">
    <text evidence="4 5 6">Exhibits hyperbranching and a lower level of conidiation (PubMed:11916702, PubMed:12480906, PubMed:12514801). Leads to sensitivity to the chitin-binding reagent Calcofluor white (CFW) (PubMed:12480906).</text>
</comment>
<comment type="similarity">
    <text evidence="8">Belongs to the chitin synthase family. Class III subfamily.</text>
</comment>
<proteinExistence type="evidence at transcript level"/>
<evidence type="ECO:0000255" key="1"/>
<evidence type="ECO:0000255" key="2">
    <source>
        <dbReference type="PROSITE-ProRule" id="PRU00498"/>
    </source>
</evidence>
<evidence type="ECO:0000256" key="3">
    <source>
        <dbReference type="SAM" id="MobiDB-lite"/>
    </source>
</evidence>
<evidence type="ECO:0000269" key="4">
    <source>
    </source>
</evidence>
<evidence type="ECO:0000269" key="5">
    <source>
    </source>
</evidence>
<evidence type="ECO:0000269" key="6">
    <source>
    </source>
</evidence>
<evidence type="ECO:0000303" key="7">
    <source>
    </source>
</evidence>
<evidence type="ECO:0000305" key="8"/>
<evidence type="ECO:0000305" key="9">
    <source>
    </source>
</evidence>
<reference key="1">
    <citation type="journal article" date="2005" name="Nature">
        <title>Genome sequencing and analysis of Aspergillus oryzae.</title>
        <authorList>
            <person name="Machida M."/>
            <person name="Asai K."/>
            <person name="Sano M."/>
            <person name="Tanaka T."/>
            <person name="Kumagai T."/>
            <person name="Terai G."/>
            <person name="Kusumoto K."/>
            <person name="Arima T."/>
            <person name="Akita O."/>
            <person name="Kashiwagi Y."/>
            <person name="Abe K."/>
            <person name="Gomi K."/>
            <person name="Horiuchi H."/>
            <person name="Kitamoto K."/>
            <person name="Kobayashi T."/>
            <person name="Takeuchi M."/>
            <person name="Denning D.W."/>
            <person name="Galagan J.E."/>
            <person name="Nierman W.C."/>
            <person name="Yu J."/>
            <person name="Archer D.B."/>
            <person name="Bennett J.W."/>
            <person name="Bhatnagar D."/>
            <person name="Cleveland T.E."/>
            <person name="Fedorova N.D."/>
            <person name="Gotoh O."/>
            <person name="Horikawa H."/>
            <person name="Hosoyama A."/>
            <person name="Ichinomiya M."/>
            <person name="Igarashi R."/>
            <person name="Iwashita K."/>
            <person name="Juvvadi P.R."/>
            <person name="Kato M."/>
            <person name="Kato Y."/>
            <person name="Kin T."/>
            <person name="Kokubun A."/>
            <person name="Maeda H."/>
            <person name="Maeyama N."/>
            <person name="Maruyama J."/>
            <person name="Nagasaki H."/>
            <person name="Nakajima T."/>
            <person name="Oda K."/>
            <person name="Okada K."/>
            <person name="Paulsen I."/>
            <person name="Sakamoto K."/>
            <person name="Sawano T."/>
            <person name="Takahashi M."/>
            <person name="Takase K."/>
            <person name="Terabayashi Y."/>
            <person name="Wortman J.R."/>
            <person name="Yamada O."/>
            <person name="Yamagata Y."/>
            <person name="Anazawa H."/>
            <person name="Hata Y."/>
            <person name="Koide Y."/>
            <person name="Komori T."/>
            <person name="Koyama Y."/>
            <person name="Minetoki T."/>
            <person name="Suharnan S."/>
            <person name="Tanaka A."/>
            <person name="Isono K."/>
            <person name="Kuhara S."/>
            <person name="Ogasawara N."/>
            <person name="Kikuchi H."/>
        </authorList>
    </citation>
    <scope>NUCLEOTIDE SEQUENCE [LARGE SCALE GENOMIC DNA]</scope>
    <source>
        <strain>ATCC 42149 / RIB 40</strain>
    </source>
</reference>
<reference key="2">
    <citation type="journal article" date="2002" name="Microbiology">
        <title>Altering the expression of two chitin synthase genes differentially affects the growth and morphology of Aspergillus oryzae.</title>
        <authorList>
            <person name="Mueller C."/>
            <person name="Hjort C.M."/>
            <person name="Hansen K."/>
            <person name="Nielsen J."/>
        </authorList>
    </citation>
    <scope>FUNCTION</scope>
    <scope>DISRUPTION PHENOTYPE</scope>
    <scope>INDUCTION</scope>
</reference>
<reference key="3">
    <citation type="journal article" date="2002" name="Appl. Environ. Microbiol.">
        <title>Metabolic engineering of the morphology of Aspergillus oryzae by altering chitin synthesis.</title>
        <authorList>
            <person name="Mueller C."/>
            <person name="McIntyre M."/>
            <person name="Hansen K."/>
            <person name="Nielsen J."/>
        </authorList>
    </citation>
    <scope>FUNCTION</scope>
    <scope>DISRUPTION PHENOTYPE</scope>
</reference>
<reference key="4">
    <citation type="journal article" date="2003" name="Biotechnol. Bioeng.">
        <title>Effect of deletion of chitin synthase genes on mycelial morphology and culture viscosity in Aspergillus oryzae.</title>
        <authorList>
            <person name="Mueller C."/>
            <person name="Hansen K."/>
            <person name="Szabo P."/>
            <person name="Nielsen J."/>
        </authorList>
    </citation>
    <scope>FUNCTION</scope>
    <scope>DISRUPTION PHENOTYPE</scope>
</reference>
<keyword id="KW-1003">Cell membrane</keyword>
<keyword id="KW-0961">Cell wall biogenesis/degradation</keyword>
<keyword id="KW-0325">Glycoprotein</keyword>
<keyword id="KW-0328">Glycosyltransferase</keyword>
<keyword id="KW-0472">Membrane</keyword>
<keyword id="KW-1185">Reference proteome</keyword>
<keyword id="KW-0808">Transferase</keyword>
<keyword id="KW-0812">Transmembrane</keyword>
<keyword id="KW-1133">Transmembrane helix</keyword>
<name>CHSB_ASPOR</name>
<sequence length="916" mass="101728">MAYQPPGKDNGAQSPNYNDSGHRLEDLPHGATYEEEASTGLLSHQQGGPFGGPFDDPHQRGTSPVRPTSGYSLTETYAPDAGFHDPYSTTGSVYSGNSAENPAAAFGVPGRVASPYARSETSSTEAWRQRQAPGGGGGGGLRRYATRKVKLVQGSVLSVDYPVPSAIQNAIQAKYRNDLEGGSEEFTHMRYTAATCDPNDFTLHNGYNLRPAMYNRHTELLIAITYYNEDKTLTARTLHGVMQNIRDIVNLKKSEFWNKGGPAWQKIVVALVFDGIDPCDKDTLDVLATIGIYQDGVMKRDVDGKETVAHIFEYTTQLSVTPNQQLIRPTDDGPTTLPPVQMMFCLKQKNSKKINSHRWLFNAFGRILNPEVCILLDAGTKPGQKSLLALWEGFYNDKDLGGACGEIHAMLGKGWKNLINPLVAAQNFEYKISNILDKPLESSFGYVSVLPGAFSAYRFRAIMGRPLEQYFHGDHTLSKQLGKKGIEGMNIFKKNMFLAEDRILCFELVAKAGSKWHLSYIKASKGETDVPEGVAEFISQRRRWLNGSFAAGLYSLMHFGRMYKSGHNIIRMFFLHIQMLYNVFNTILTWFSLASYWLTTTVIMDLVGTPSESNGNKGFPFGKSATPIINTIVKYVYLGLLLLQFILALGNRPKGSRFSYLTSFVVFGIIQIYVVVDALYLVVRAFTNSDAIDFVTDQGVGEFLKSFFSSSGAGIIIIALAATFGLYFVASFMYLDPWHMFTSFPAYMFVQSSYINVLNVYAFSNWHDVSWGTKGSDKADALPSATTTKEDGGKEAVIEEIDKPQADIDSQFEATVKRALTPYVPPVEKDEKSLDDSYKSFRTRLVTLWIFSNAFLAVCITSDGMDKFGFTNTATDRTSRFFQALLWSNAAVALVRFIGACWFLGKTGLMCCFARR</sequence>
<organism>
    <name type="scientific">Aspergillus oryzae (strain ATCC 42149 / RIB 40)</name>
    <name type="common">Yellow koji mold</name>
    <dbReference type="NCBI Taxonomy" id="510516"/>
    <lineage>
        <taxon>Eukaryota</taxon>
        <taxon>Fungi</taxon>
        <taxon>Dikarya</taxon>
        <taxon>Ascomycota</taxon>
        <taxon>Pezizomycotina</taxon>
        <taxon>Eurotiomycetes</taxon>
        <taxon>Eurotiomycetidae</taxon>
        <taxon>Eurotiales</taxon>
        <taxon>Aspergillaceae</taxon>
        <taxon>Aspergillus</taxon>
        <taxon>Aspergillus subgen. Circumdati</taxon>
    </lineage>
</organism>
<protein>
    <recommendedName>
        <fullName evidence="7">Chitin synthase B</fullName>
        <ecNumber evidence="9">2.4.1.16</ecNumber>
    </recommendedName>
    <alternativeName>
        <fullName evidence="8">Chitin-UDP acetyl-glucosaminyl transferase B</fullName>
    </alternativeName>
    <alternativeName>
        <fullName evidence="7">Class-III chitin synthase B</fullName>
    </alternativeName>
</protein>
<dbReference type="EC" id="2.4.1.16" evidence="9"/>
<dbReference type="EMBL" id="AP007164">
    <property type="protein sequence ID" value="BAE62281.1"/>
    <property type="molecule type" value="Genomic_DNA"/>
</dbReference>
<dbReference type="RefSeq" id="XP_001823414.1">
    <property type="nucleotide sequence ID" value="XM_001823362.2"/>
</dbReference>
<dbReference type="SMR" id="Q2U834"/>
<dbReference type="STRING" id="510516.Q2U834"/>
<dbReference type="CAZy" id="GT2">
    <property type="family name" value="Glycosyltransferase Family 2"/>
</dbReference>
<dbReference type="EnsemblFungi" id="BAE62281">
    <property type="protein sequence ID" value="BAE62281"/>
    <property type="gene ID" value="AO090701000589"/>
</dbReference>
<dbReference type="GeneID" id="5995471"/>
<dbReference type="KEGG" id="aor:AO090701000589"/>
<dbReference type="VEuPathDB" id="FungiDB:AO090701000589"/>
<dbReference type="HOGENOM" id="CLU_004760_0_1_1"/>
<dbReference type="OMA" id="WHLTYIK"/>
<dbReference type="OrthoDB" id="41435at5052"/>
<dbReference type="Proteomes" id="UP000006564">
    <property type="component" value="Chromosome 5"/>
</dbReference>
<dbReference type="GO" id="GO:0030428">
    <property type="term" value="C:cell septum"/>
    <property type="evidence" value="ECO:0007669"/>
    <property type="project" value="TreeGrafter"/>
</dbReference>
<dbReference type="GO" id="GO:0005886">
    <property type="term" value="C:plasma membrane"/>
    <property type="evidence" value="ECO:0007669"/>
    <property type="project" value="UniProtKB-SubCell"/>
</dbReference>
<dbReference type="GO" id="GO:0004100">
    <property type="term" value="F:chitin synthase activity"/>
    <property type="evidence" value="ECO:0007669"/>
    <property type="project" value="UniProtKB-EC"/>
</dbReference>
<dbReference type="GO" id="GO:0071555">
    <property type="term" value="P:cell wall organization"/>
    <property type="evidence" value="ECO:0007669"/>
    <property type="project" value="UniProtKB-KW"/>
</dbReference>
<dbReference type="GO" id="GO:0006031">
    <property type="term" value="P:chitin biosynthetic process"/>
    <property type="evidence" value="ECO:0007669"/>
    <property type="project" value="InterPro"/>
</dbReference>
<dbReference type="GO" id="GO:0030448">
    <property type="term" value="P:hyphal growth"/>
    <property type="evidence" value="ECO:0000315"/>
    <property type="project" value="AspGD"/>
</dbReference>
<dbReference type="CDD" id="cd04190">
    <property type="entry name" value="Chitin_synth_C"/>
    <property type="match status" value="1"/>
</dbReference>
<dbReference type="InterPro" id="IPR004835">
    <property type="entry name" value="Chitin_synth"/>
</dbReference>
<dbReference type="InterPro" id="IPR004834">
    <property type="entry name" value="Chitin_synth_fun"/>
</dbReference>
<dbReference type="InterPro" id="IPR013616">
    <property type="entry name" value="Chitin_synth_N"/>
</dbReference>
<dbReference type="InterPro" id="IPR029044">
    <property type="entry name" value="Nucleotide-diphossugar_trans"/>
</dbReference>
<dbReference type="PANTHER" id="PTHR22914">
    <property type="entry name" value="CHITIN SYNTHASE"/>
    <property type="match status" value="1"/>
</dbReference>
<dbReference type="PANTHER" id="PTHR22914:SF11">
    <property type="entry name" value="CHITIN SYNTHASE B"/>
    <property type="match status" value="1"/>
</dbReference>
<dbReference type="Pfam" id="PF01644">
    <property type="entry name" value="Chitin_synth_1"/>
    <property type="match status" value="1"/>
</dbReference>
<dbReference type="Pfam" id="PF08407">
    <property type="entry name" value="Chitin_synth_1N"/>
    <property type="match status" value="1"/>
</dbReference>
<dbReference type="SUPFAM" id="SSF53448">
    <property type="entry name" value="Nucleotide-diphospho-sugar transferases"/>
    <property type="match status" value="1"/>
</dbReference>
<accession>Q2U834</accession>